<comment type="function">
    <text evidence="2 3">Testis-specific potassium channel activated by both intracellular pH and membrane voltage that mediates export of K(+). Represents the primary spermatozoan K(+) current. The channel underlies a pH-triggered membrane hyperpolarization during the process of sperm capacitation, as sperm encounter the alkaline environment near the ovum in the female reproductive tract, thereby playing an essential for male fertility.</text>
</comment>
<comment type="catalytic activity">
    <reaction evidence="3">
        <text>K(+)(in) = K(+)(out)</text>
        <dbReference type="Rhea" id="RHEA:29463"/>
        <dbReference type="ChEBI" id="CHEBI:29103"/>
    </reaction>
</comment>
<comment type="activity regulation">
    <text evidence="2 3">Regulated by changes in cytosolic pH; activated by alkalization. VU0546110 acts as a selective inhibitor. The auxiliary subunit LRRC52 shifts the activation of KCNU1 to more negative potentials at a given pH.</text>
</comment>
<comment type="subunit">
    <text evidence="2">Homotetramer; which constitutes the calcium-activated potassium channel. Interacts with LRRC52; this interaction changes some channel gating properties, such as shifting gating to more negative potentials at a given pH.</text>
</comment>
<comment type="subcellular location">
    <subcellularLocation>
        <location evidence="3">Cell membrane</location>
        <topology evidence="5">Multi-pass membrane protein</topology>
    </subcellularLocation>
    <subcellularLocation>
        <location evidence="2">Cell projection</location>
        <location evidence="2">Cilium</location>
        <location evidence="2">Flagellum membrane</location>
        <topology evidence="5">Multi-pass membrane protein</topology>
    </subcellularLocation>
</comment>
<comment type="tissue specificity">
    <text>Testis-specific.</text>
</comment>
<comment type="domain">
    <text evidence="1">The S4 segment, which is characterized by a series of positively charged amino acids at every third position, is part of the voltage-sensor.</text>
</comment>
<comment type="domain">
    <text evidence="1">The pore-forming domain (also referred as P region) is imbedded into the membrane, and forms the selectivity filter of the pore. It contains the signature sequence of potassium channels that displays selectivity to potassium (By similarity).</text>
</comment>
<comment type="domain">
    <text evidence="1">The C-terminal cytosolic region confers the pH-dependence.</text>
</comment>
<comment type="domain">
    <text evidence="4">The RCK N-terminal domain mediates the homotetramerization, thereby promoting the assembly of monomers into functional potassium channel.</text>
</comment>
<comment type="similarity">
    <text evidence="8">Belongs to the potassium channel family. Calcium-activated (TC 1.A.1.3) subfamily. KCa5.1/KCNU1 sub-subfamily.</text>
</comment>
<proteinExistence type="evidence at transcript level"/>
<accession>A5LFX5</accession>
<sequence length="1149" mass="129492">MFQTKLRNESWEDLQKMSCTTEIQVAFILSSFMTFISGLIILLIFRLIWRTVKKWQIIKGTGIILELFTSGSIRRNHVRSLHFHGRFRDRIEMLLSAQTFVGQVLVILVFVLSIGSLIIYFINSADPVGSCSSYEDKTIPVDLVFNAFFSFYFGLRFMAADDKIKFWLEMNSIVDIFTIPPTFISYYLKSNWLGLRFLRALRLLELPRILQILRAIKTSNSVKFSKLLSIVLSTWFTAAGFIHLVENSGDPWLKGRNSQNISYFDSVYLVMATTSTVGFGDVVAKTSLGRTFIIFFTLGSLILFANYIPEMVELFANKRKYTSSYEALKGKKFIVVCGNITVDSVTAFLRNFLRRKSGEINTEIVFLGESPPSLELETIFKCYLAYTTFISGSAMKWEDLRRVAVESAEACLIIANPLCSDSHAEDISNIMRVLSIKNYDSTTRIIIQILQSHNKVYLPKIPSWDWDAGDNIICFAELKLGFIAQGCLVPGLCTFLTSLFVEQNRKVTPKQTWQKHFLNSMKNNILTQRLSDDFAGMSFPEVARLCFLKMHLLLIAIEYKSLFTDGFCGLILNPPAQIRIHKNTLGFFIAETPKEVKRALFYCSVCHDDVFIPELITNCGCKSRSRQHVTVPAVKIVKKCMKGLSSHMAGQDSPPRVHASPSRISDFTTRTFPHDVEQDSDQLDSSGMFHWCKPISLDKVTLKRSRKLKHKFRNHIVACVFGDAQSALIGLRNFVMPLRASNYTRKELKDIVFIGSLDYLQREWRFLRNFPQIYILPGCALYSGDLHAANIEQCSMCVVLSPPSKPSSSQTLVDAEAILATLTIGSLQIDSSSDSSPSVSEETASCTNGHNEKSNCRKVPILIELKNPSNIHFIEQLGGLEGSLQETNLHLSTAFSTGTVFSGSFLDSLLATSFYNYHVLELLQMLVTGGVSSQLEQHLDKDKVYGVADSCTTLLSGRNRCKMGLLSLHQTILSDVNPRNTFGQLFCGSLDLFGILCVGLYRIIDEEELNPENKRFVITRPANEFKLLPSDLVFCAIPFSTACYKRNEEFSSQKSYEIIKEASQTTETHSDTNFPPTIYSVDETSYSPVYSYPSRTNSVYSANQTARNQIRTNSSITSQKPLGDNAKKNGKKISDEISDEDPFAYSEPL</sequence>
<name>KCNU1_MACFA</name>
<gene>
    <name type="primary">KCNU1</name>
    <name type="synonym">KCNMA3</name>
    <name type="synonym">SLO3</name>
    <name type="ORF">QtsA-16614</name>
</gene>
<feature type="chain" id="PRO_0000349187" description="Potassium channel subfamily U member 1">
    <location>
        <begin position="1"/>
        <end position="1149"/>
    </location>
</feature>
<feature type="topological domain" description="Extracellular" evidence="5">
    <location>
        <begin position="1"/>
        <end position="24"/>
    </location>
</feature>
<feature type="transmembrane region" description="Helical; Name=Segment S0" evidence="5">
    <location>
        <begin position="25"/>
        <end position="45"/>
    </location>
</feature>
<feature type="topological domain" description="Cytoplasmic" evidence="5">
    <location>
        <begin position="46"/>
        <end position="101"/>
    </location>
</feature>
<feature type="transmembrane region" description="Helical; Name=Segment S1" evidence="5">
    <location>
        <begin position="102"/>
        <end position="122"/>
    </location>
</feature>
<feature type="topological domain" description="Extracellular" evidence="5">
    <location>
        <begin position="123"/>
        <end position="138"/>
    </location>
</feature>
<feature type="transmembrane region" description="Helical; Name=Segment S2" evidence="5">
    <location>
        <begin position="139"/>
        <end position="159"/>
    </location>
</feature>
<feature type="topological domain" description="Cytoplasmic" evidence="5">
    <location>
        <begin position="160"/>
        <end position="163"/>
    </location>
</feature>
<feature type="transmembrane region" description="Helical; Name=Segment S3" evidence="5">
    <location>
        <begin position="164"/>
        <end position="184"/>
    </location>
</feature>
<feature type="topological domain" description="Extracellular" evidence="5">
    <location>
        <begin position="185"/>
        <end position="188"/>
    </location>
</feature>
<feature type="transmembrane region" description="Helical; Voltage-sensor; Name=Segment S4" evidence="5">
    <location>
        <begin position="189"/>
        <end position="209"/>
    </location>
</feature>
<feature type="topological domain" description="Cytoplasmic" evidence="5">
    <location>
        <begin position="210"/>
        <end position="226"/>
    </location>
</feature>
<feature type="transmembrane region" description="Helical; Name=Segment S5" evidence="5">
    <location>
        <begin position="227"/>
        <end position="247"/>
    </location>
</feature>
<feature type="topological domain" description="Extracellular" evidence="5">
    <location>
        <begin position="248"/>
        <end position="259"/>
    </location>
</feature>
<feature type="intramembrane region" description="Pore-forming; Name=P region" evidence="5">
    <location>
        <begin position="260"/>
        <end position="282"/>
    </location>
</feature>
<feature type="topological domain" description="Extracellular" evidence="5">
    <location>
        <begin position="283"/>
        <end position="291"/>
    </location>
</feature>
<feature type="transmembrane region" description="Helical; Name=Segment S6" evidence="5">
    <location>
        <begin position="292"/>
        <end position="312"/>
    </location>
</feature>
<feature type="topological domain" description="Cytoplasmic" evidence="5">
    <location>
        <begin position="313"/>
        <end position="1149"/>
    </location>
</feature>
<feature type="domain" description="RCK N-terminal 1" evidence="6">
    <location>
        <begin position="331"/>
        <end position="473"/>
    </location>
</feature>
<feature type="domain" description="RCK N-terminal 2" evidence="6">
    <location>
        <begin position="713"/>
        <end position="884"/>
    </location>
</feature>
<feature type="region of interest" description="Disordered" evidence="7">
    <location>
        <begin position="829"/>
        <end position="851"/>
    </location>
</feature>
<feature type="region of interest" description="Disordered" evidence="7">
    <location>
        <begin position="1106"/>
        <end position="1149"/>
    </location>
</feature>
<feature type="short sequence motif" description="Selectivity for potassium">
    <location>
        <begin position="276"/>
        <end position="279"/>
    </location>
</feature>
<feature type="compositionally biased region" description="Low complexity" evidence="7">
    <location>
        <begin position="829"/>
        <end position="845"/>
    </location>
</feature>
<feature type="compositionally biased region" description="Polar residues" evidence="7">
    <location>
        <begin position="1106"/>
        <end position="1120"/>
    </location>
</feature>
<protein>
    <recommendedName>
        <fullName>Potassium channel subfamily U member 1</fullName>
    </recommendedName>
    <alternativeName>
        <fullName>Calcium-activated potassium channel subunit alpha-3</fullName>
    </alternativeName>
    <alternativeName>
        <fullName>Calcium-activated potassium channel, subfamily M subunit alpha-3</fullName>
    </alternativeName>
    <alternativeName>
        <fullName>Slowpoke homolog 3</fullName>
    </alternativeName>
</protein>
<keyword id="KW-1003">Cell membrane</keyword>
<keyword id="KW-0966">Cell projection</keyword>
<keyword id="KW-0969">Cilium</keyword>
<keyword id="KW-0282">Flagellum</keyword>
<keyword id="KW-0407">Ion channel</keyword>
<keyword id="KW-0406">Ion transport</keyword>
<keyword id="KW-0472">Membrane</keyword>
<keyword id="KW-0630">Potassium</keyword>
<keyword id="KW-0631">Potassium channel</keyword>
<keyword id="KW-0633">Potassium transport</keyword>
<keyword id="KW-1185">Reference proteome</keyword>
<keyword id="KW-0812">Transmembrane</keyword>
<keyword id="KW-1133">Transmembrane helix</keyword>
<keyword id="KW-0813">Transport</keyword>
<keyword id="KW-0851">Voltage-gated channel</keyword>
<reference key="1">
    <citation type="submission" date="2005-06" db="EMBL/GenBank/DDBJ databases">
        <title>DNA sequences of macaque genes expressed in brain or testis and its evolutionary implications.</title>
        <authorList>
            <consortium name="International consortium for macaque cDNA sequencing and analysis"/>
        </authorList>
    </citation>
    <scope>NUCLEOTIDE SEQUENCE [LARGE SCALE MRNA]</scope>
    <source>
        <tissue>Testis</tissue>
    </source>
</reference>
<evidence type="ECO:0000250" key="1"/>
<evidence type="ECO:0000250" key="2">
    <source>
        <dbReference type="UniProtKB" id="A8MYU2"/>
    </source>
</evidence>
<evidence type="ECO:0000250" key="3">
    <source>
        <dbReference type="UniProtKB" id="O54982"/>
    </source>
</evidence>
<evidence type="ECO:0000250" key="4">
    <source>
        <dbReference type="UniProtKB" id="Q12791"/>
    </source>
</evidence>
<evidence type="ECO:0000255" key="5"/>
<evidence type="ECO:0000255" key="6">
    <source>
        <dbReference type="PROSITE-ProRule" id="PRU00543"/>
    </source>
</evidence>
<evidence type="ECO:0000256" key="7">
    <source>
        <dbReference type="SAM" id="MobiDB-lite"/>
    </source>
</evidence>
<evidence type="ECO:0000305" key="8"/>
<organism>
    <name type="scientific">Macaca fascicularis</name>
    <name type="common">Crab-eating macaque</name>
    <name type="synonym">Cynomolgus monkey</name>
    <dbReference type="NCBI Taxonomy" id="9541"/>
    <lineage>
        <taxon>Eukaryota</taxon>
        <taxon>Metazoa</taxon>
        <taxon>Chordata</taxon>
        <taxon>Craniata</taxon>
        <taxon>Vertebrata</taxon>
        <taxon>Euteleostomi</taxon>
        <taxon>Mammalia</taxon>
        <taxon>Eutheria</taxon>
        <taxon>Euarchontoglires</taxon>
        <taxon>Primates</taxon>
        <taxon>Haplorrhini</taxon>
        <taxon>Catarrhini</taxon>
        <taxon>Cercopithecidae</taxon>
        <taxon>Cercopithecinae</taxon>
        <taxon>Macaca</taxon>
    </lineage>
</organism>
<dbReference type="EMBL" id="AB169017">
    <property type="protein sequence ID" value="BAF63660.1"/>
    <property type="molecule type" value="mRNA"/>
</dbReference>
<dbReference type="RefSeq" id="NP_001270492.1">
    <property type="nucleotide sequence ID" value="NM_001283563.1"/>
</dbReference>
<dbReference type="SMR" id="A5LFX5"/>
<dbReference type="STRING" id="9541.ENSMFAP00000011367"/>
<dbReference type="eggNOG" id="KOG1420">
    <property type="taxonomic scope" value="Eukaryota"/>
</dbReference>
<dbReference type="Proteomes" id="UP000233100">
    <property type="component" value="Unplaced"/>
</dbReference>
<dbReference type="GO" id="GO:0034702">
    <property type="term" value="C:monoatomic ion channel complex"/>
    <property type="evidence" value="ECO:0007669"/>
    <property type="project" value="UniProtKB-KW"/>
</dbReference>
<dbReference type="GO" id="GO:0005886">
    <property type="term" value="C:plasma membrane"/>
    <property type="evidence" value="ECO:0000250"/>
    <property type="project" value="UniProtKB"/>
</dbReference>
<dbReference type="GO" id="GO:0036126">
    <property type="term" value="C:sperm flagellum"/>
    <property type="evidence" value="ECO:0000250"/>
    <property type="project" value="UniProtKB"/>
</dbReference>
<dbReference type="GO" id="GO:0005267">
    <property type="term" value="F:potassium channel activity"/>
    <property type="evidence" value="ECO:0000250"/>
    <property type="project" value="UniProtKB"/>
</dbReference>
<dbReference type="GO" id="GO:0009566">
    <property type="term" value="P:fertilization"/>
    <property type="evidence" value="ECO:0000250"/>
    <property type="project" value="UniProtKB"/>
</dbReference>
<dbReference type="GO" id="GO:0006813">
    <property type="term" value="P:potassium ion transport"/>
    <property type="evidence" value="ECO:0000250"/>
    <property type="project" value="UniProtKB"/>
</dbReference>
<dbReference type="GO" id="GO:0022414">
    <property type="term" value="P:reproductive process"/>
    <property type="evidence" value="ECO:0000250"/>
    <property type="project" value="UniProtKB"/>
</dbReference>
<dbReference type="FunFam" id="3.40.50.720:FF:000005">
    <property type="entry name" value="calcium-activated potassium channel subunit alpha-1 isoform X6"/>
    <property type="match status" value="1"/>
</dbReference>
<dbReference type="FunFam" id="1.10.287.70:FF:000130">
    <property type="entry name" value="Potassium calcium-activated channel subfamily U member 1"/>
    <property type="match status" value="1"/>
</dbReference>
<dbReference type="FunFam" id="3.40.50.720:FF:000403">
    <property type="entry name" value="Potassium calcium-activated channel subfamily U member 1"/>
    <property type="match status" value="1"/>
</dbReference>
<dbReference type="Gene3D" id="1.10.287.70">
    <property type="match status" value="1"/>
</dbReference>
<dbReference type="Gene3D" id="3.40.50.720">
    <property type="entry name" value="NAD(P)-binding Rossmann-like Domain"/>
    <property type="match status" value="2"/>
</dbReference>
<dbReference type="InterPro" id="IPR005821">
    <property type="entry name" value="Ion_trans_dom"/>
</dbReference>
<dbReference type="InterPro" id="IPR003929">
    <property type="entry name" value="K_chnl_BK_asu"/>
</dbReference>
<dbReference type="InterPro" id="IPR047871">
    <property type="entry name" value="K_chnl_Slo-like"/>
</dbReference>
<dbReference type="InterPro" id="IPR003148">
    <property type="entry name" value="RCK_N"/>
</dbReference>
<dbReference type="InterPro" id="IPR048735">
    <property type="entry name" value="Slowpoke-like_C"/>
</dbReference>
<dbReference type="PANTHER" id="PTHR10027">
    <property type="entry name" value="CALCIUM-ACTIVATED POTASSIUM CHANNEL ALPHA CHAIN"/>
    <property type="match status" value="1"/>
</dbReference>
<dbReference type="PANTHER" id="PTHR10027:SF23">
    <property type="entry name" value="POTASSIUM CHANNEL SUBFAMILY U MEMBER 1"/>
    <property type="match status" value="1"/>
</dbReference>
<dbReference type="Pfam" id="PF03493">
    <property type="entry name" value="BK_channel_a"/>
    <property type="match status" value="1"/>
</dbReference>
<dbReference type="Pfam" id="PF00520">
    <property type="entry name" value="Ion_trans"/>
    <property type="match status" value="1"/>
</dbReference>
<dbReference type="Pfam" id="PF22614">
    <property type="entry name" value="Slo-like_RCK"/>
    <property type="match status" value="2"/>
</dbReference>
<dbReference type="Pfam" id="PF21014">
    <property type="entry name" value="Slowpoke_C"/>
    <property type="match status" value="1"/>
</dbReference>
<dbReference type="PRINTS" id="PR01449">
    <property type="entry name" value="BKCHANNELA"/>
</dbReference>
<dbReference type="SUPFAM" id="SSF81324">
    <property type="entry name" value="Voltage-gated potassium channels"/>
    <property type="match status" value="1"/>
</dbReference>
<dbReference type="PROSITE" id="PS51201">
    <property type="entry name" value="RCK_N"/>
    <property type="match status" value="2"/>
</dbReference>